<evidence type="ECO:0000255" key="1">
    <source>
        <dbReference type="HAMAP-Rule" id="MF_00049"/>
    </source>
</evidence>
<protein>
    <recommendedName>
        <fullName evidence="1">Leucine--tRNA ligase</fullName>
        <ecNumber evidence="1">6.1.1.4</ecNumber>
    </recommendedName>
    <alternativeName>
        <fullName evidence="1">Leucyl-tRNA synthetase</fullName>
        <shortName evidence="1">LeuRS</shortName>
    </alternativeName>
</protein>
<organism>
    <name type="scientific">Streptococcus pneumoniae serotype 19F (strain G54)</name>
    <dbReference type="NCBI Taxonomy" id="512566"/>
    <lineage>
        <taxon>Bacteria</taxon>
        <taxon>Bacillati</taxon>
        <taxon>Bacillota</taxon>
        <taxon>Bacilli</taxon>
        <taxon>Lactobacillales</taxon>
        <taxon>Streptococcaceae</taxon>
        <taxon>Streptococcus</taxon>
    </lineage>
</organism>
<accession>B5E6T0</accession>
<reference key="1">
    <citation type="journal article" date="2001" name="Microb. Drug Resist.">
        <title>Annotated draft genomic sequence from a Streptococcus pneumoniae type 19F clinical isolate.</title>
        <authorList>
            <person name="Dopazo J."/>
            <person name="Mendoza A."/>
            <person name="Herrero J."/>
            <person name="Caldara F."/>
            <person name="Humbert Y."/>
            <person name="Friedli L."/>
            <person name="Guerrier M."/>
            <person name="Grand-Schenk E."/>
            <person name="Gandin C."/>
            <person name="de Francesco M."/>
            <person name="Polissi A."/>
            <person name="Buell G."/>
            <person name="Feger G."/>
            <person name="Garcia E."/>
            <person name="Peitsch M."/>
            <person name="Garcia-Bustos J.F."/>
        </authorList>
    </citation>
    <scope>NUCLEOTIDE SEQUENCE [LARGE SCALE GENOMIC DNA]</scope>
    <source>
        <strain>G54</strain>
    </source>
</reference>
<reference key="2">
    <citation type="submission" date="2008-03" db="EMBL/GenBank/DDBJ databases">
        <title>Pneumococcal beta glucoside metabolism investigated by whole genome comparison.</title>
        <authorList>
            <person name="Mulas L."/>
            <person name="Trappetti C."/>
            <person name="Hakenbeck R."/>
            <person name="Iannelli F."/>
            <person name="Pozzi G."/>
            <person name="Davidsen T.M."/>
            <person name="Tettelin H."/>
            <person name="Oggioni M."/>
        </authorList>
    </citation>
    <scope>NUCLEOTIDE SEQUENCE [LARGE SCALE GENOMIC DNA]</scope>
    <source>
        <strain>G54</strain>
    </source>
</reference>
<keyword id="KW-0030">Aminoacyl-tRNA synthetase</keyword>
<keyword id="KW-0067">ATP-binding</keyword>
<keyword id="KW-0963">Cytoplasm</keyword>
<keyword id="KW-0436">Ligase</keyword>
<keyword id="KW-0547">Nucleotide-binding</keyword>
<keyword id="KW-0648">Protein biosynthesis</keyword>
<feature type="chain" id="PRO_1000091369" description="Leucine--tRNA ligase">
    <location>
        <begin position="1"/>
        <end position="833"/>
    </location>
</feature>
<feature type="short sequence motif" description="'HIGH' region">
    <location>
        <begin position="41"/>
        <end position="52"/>
    </location>
</feature>
<feature type="short sequence motif" description="'KMSKS' region">
    <location>
        <begin position="610"/>
        <end position="614"/>
    </location>
</feature>
<feature type="binding site" evidence="1">
    <location>
        <position position="613"/>
    </location>
    <ligand>
        <name>ATP</name>
        <dbReference type="ChEBI" id="CHEBI:30616"/>
    </ligand>
</feature>
<gene>
    <name evidence="1" type="primary">leuS</name>
    <name type="ordered locus">SPG_0241</name>
</gene>
<dbReference type="EC" id="6.1.1.4" evidence="1"/>
<dbReference type="EMBL" id="CP001015">
    <property type="protein sequence ID" value="ACF55084.1"/>
    <property type="molecule type" value="Genomic_DNA"/>
</dbReference>
<dbReference type="SMR" id="B5E6T0"/>
<dbReference type="KEGG" id="spx:SPG_0241"/>
<dbReference type="HOGENOM" id="CLU_004427_0_0_9"/>
<dbReference type="GO" id="GO:0005829">
    <property type="term" value="C:cytosol"/>
    <property type="evidence" value="ECO:0007669"/>
    <property type="project" value="TreeGrafter"/>
</dbReference>
<dbReference type="GO" id="GO:0002161">
    <property type="term" value="F:aminoacyl-tRNA deacylase activity"/>
    <property type="evidence" value="ECO:0007669"/>
    <property type="project" value="InterPro"/>
</dbReference>
<dbReference type="GO" id="GO:0005524">
    <property type="term" value="F:ATP binding"/>
    <property type="evidence" value="ECO:0007669"/>
    <property type="project" value="UniProtKB-UniRule"/>
</dbReference>
<dbReference type="GO" id="GO:0004823">
    <property type="term" value="F:leucine-tRNA ligase activity"/>
    <property type="evidence" value="ECO:0007669"/>
    <property type="project" value="UniProtKB-UniRule"/>
</dbReference>
<dbReference type="GO" id="GO:0006429">
    <property type="term" value="P:leucyl-tRNA aminoacylation"/>
    <property type="evidence" value="ECO:0007669"/>
    <property type="project" value="UniProtKB-UniRule"/>
</dbReference>
<dbReference type="CDD" id="cd07958">
    <property type="entry name" value="Anticodon_Ia_Leu_BEm"/>
    <property type="match status" value="1"/>
</dbReference>
<dbReference type="CDD" id="cd00812">
    <property type="entry name" value="LeuRS_core"/>
    <property type="match status" value="1"/>
</dbReference>
<dbReference type="FunFam" id="1.10.730.10:FF:000012">
    <property type="entry name" value="Leucine--tRNA ligase"/>
    <property type="match status" value="1"/>
</dbReference>
<dbReference type="FunFam" id="3.40.50.620:FF:000056">
    <property type="entry name" value="Leucine--tRNA ligase"/>
    <property type="match status" value="1"/>
</dbReference>
<dbReference type="FunFam" id="3.40.50.620:FF:000077">
    <property type="entry name" value="Leucine--tRNA ligase"/>
    <property type="match status" value="1"/>
</dbReference>
<dbReference type="FunFam" id="1.10.730.10:FF:000011">
    <property type="entry name" value="Leucine--tRNA ligase chloroplastic/mitochondrial"/>
    <property type="match status" value="1"/>
</dbReference>
<dbReference type="Gene3D" id="3.40.50.620">
    <property type="entry name" value="HUPs"/>
    <property type="match status" value="2"/>
</dbReference>
<dbReference type="Gene3D" id="1.10.730.10">
    <property type="entry name" value="Isoleucyl-tRNA Synthetase, Domain 1"/>
    <property type="match status" value="1"/>
</dbReference>
<dbReference type="Gene3D" id="3.90.740.10">
    <property type="entry name" value="Valyl/Leucyl/Isoleucyl-tRNA synthetase, editing domain"/>
    <property type="match status" value="1"/>
</dbReference>
<dbReference type="HAMAP" id="MF_00049_B">
    <property type="entry name" value="Leu_tRNA_synth_B"/>
    <property type="match status" value="1"/>
</dbReference>
<dbReference type="InterPro" id="IPR001412">
    <property type="entry name" value="aa-tRNA-synth_I_CS"/>
</dbReference>
<dbReference type="InterPro" id="IPR002300">
    <property type="entry name" value="aa-tRNA-synth_Ia"/>
</dbReference>
<dbReference type="InterPro" id="IPR002302">
    <property type="entry name" value="Leu-tRNA-ligase"/>
</dbReference>
<dbReference type="InterPro" id="IPR025709">
    <property type="entry name" value="Leu_tRNA-synth_edit"/>
</dbReference>
<dbReference type="InterPro" id="IPR013155">
    <property type="entry name" value="M/V/L/I-tRNA-synth_anticd-bd"/>
</dbReference>
<dbReference type="InterPro" id="IPR015413">
    <property type="entry name" value="Methionyl/Leucyl_tRNA_Synth"/>
</dbReference>
<dbReference type="InterPro" id="IPR014729">
    <property type="entry name" value="Rossmann-like_a/b/a_fold"/>
</dbReference>
<dbReference type="InterPro" id="IPR009080">
    <property type="entry name" value="tRNAsynth_Ia_anticodon-bd"/>
</dbReference>
<dbReference type="InterPro" id="IPR009008">
    <property type="entry name" value="Val/Leu/Ile-tRNA-synth_edit"/>
</dbReference>
<dbReference type="NCBIfam" id="TIGR00396">
    <property type="entry name" value="leuS_bact"/>
    <property type="match status" value="1"/>
</dbReference>
<dbReference type="PANTHER" id="PTHR43740:SF2">
    <property type="entry name" value="LEUCINE--TRNA LIGASE, MITOCHONDRIAL"/>
    <property type="match status" value="1"/>
</dbReference>
<dbReference type="PANTHER" id="PTHR43740">
    <property type="entry name" value="LEUCYL-TRNA SYNTHETASE"/>
    <property type="match status" value="1"/>
</dbReference>
<dbReference type="Pfam" id="PF08264">
    <property type="entry name" value="Anticodon_1"/>
    <property type="match status" value="1"/>
</dbReference>
<dbReference type="Pfam" id="PF00133">
    <property type="entry name" value="tRNA-synt_1"/>
    <property type="match status" value="2"/>
</dbReference>
<dbReference type="Pfam" id="PF13603">
    <property type="entry name" value="tRNA-synt_1_2"/>
    <property type="match status" value="1"/>
</dbReference>
<dbReference type="Pfam" id="PF09334">
    <property type="entry name" value="tRNA-synt_1g"/>
    <property type="match status" value="1"/>
</dbReference>
<dbReference type="PRINTS" id="PR00985">
    <property type="entry name" value="TRNASYNTHLEU"/>
</dbReference>
<dbReference type="SUPFAM" id="SSF47323">
    <property type="entry name" value="Anticodon-binding domain of a subclass of class I aminoacyl-tRNA synthetases"/>
    <property type="match status" value="1"/>
</dbReference>
<dbReference type="SUPFAM" id="SSF52374">
    <property type="entry name" value="Nucleotidylyl transferase"/>
    <property type="match status" value="1"/>
</dbReference>
<dbReference type="SUPFAM" id="SSF50677">
    <property type="entry name" value="ValRS/IleRS/LeuRS editing domain"/>
    <property type="match status" value="1"/>
</dbReference>
<dbReference type="PROSITE" id="PS00178">
    <property type="entry name" value="AA_TRNA_LIGASE_I"/>
    <property type="match status" value="1"/>
</dbReference>
<sequence length="833" mass="94284">MSFYNHKEIEPKWQGYWAEHHTFKTGTDASKPKFYALDMFPYPSGAGLHVGHPEGYTATDILSRYKRAQGYNVLHPMGWDAFGLPAEQYAMDTGNDPAEFTAENIANFKRQINALGFSYDWDREVNTTDPNYYKWTQWIFTKLYEKGLAYEAEVPVNWVEELGTAIANEEVLPDGTSERGGYPVVRKPMRQWMLKITAYAERLLNDLDELDWPESIKDMQRNWIGKSTGANVTFKVKGTDKEFTVFTTRPDTLFGATFTVLAPEHELVDAITSSEQAEAVANYKHQASLKSDLARTDLAKEKTGVWTGAYAINPVNGKEIPIWIADYVLASYGTGAVMAVPAHDQRDWEFAKQFDLPIVEVLEGGNVAEAAYTEDGLHVNSDFLDGLNKEEAIAKIVAWLEEKGCGQEKVTYRLRDWLFSRQRYWGEPIPIIHWEDGTSTAVPESELPLVLPVTKDIRPSGTGESPLANLTDWLEVTRADGVKGRRETNTMPQWAGSSWYYLRYIDPHNTEKLADEDLLKQWLPVDIYVGGAEHAVLHLLYARFWHKFLYDLGVVPTKEPFQKLFNQGMILGTSYRDHRGALVTTDKVEKRDGSFFHVETGEELEQAPAKMSKSLKNVVNPDDVVEQYGADTLRVYEMFMGPLDASIAWSEEGLEGSRKFLDRVYRLITSKEILAENNGALDKAYNETVKAVTEQIESLKFNTAIAQLMVFVNAANKEDKLYVDYAKGFIQLIAPFAPHLAEELWQTVAETGESISYVAWPTWDESKLVEDEIEIVVQIKGKVRAKLMVAKDLSREELQEIALADEKVKAEIDGKEIVKVISVPNKLVNIVVK</sequence>
<name>SYL_STRP4</name>
<proteinExistence type="inferred from homology"/>
<comment type="catalytic activity">
    <reaction evidence="1">
        <text>tRNA(Leu) + L-leucine + ATP = L-leucyl-tRNA(Leu) + AMP + diphosphate</text>
        <dbReference type="Rhea" id="RHEA:11688"/>
        <dbReference type="Rhea" id="RHEA-COMP:9613"/>
        <dbReference type="Rhea" id="RHEA-COMP:9622"/>
        <dbReference type="ChEBI" id="CHEBI:30616"/>
        <dbReference type="ChEBI" id="CHEBI:33019"/>
        <dbReference type="ChEBI" id="CHEBI:57427"/>
        <dbReference type="ChEBI" id="CHEBI:78442"/>
        <dbReference type="ChEBI" id="CHEBI:78494"/>
        <dbReference type="ChEBI" id="CHEBI:456215"/>
        <dbReference type="EC" id="6.1.1.4"/>
    </reaction>
</comment>
<comment type="subcellular location">
    <subcellularLocation>
        <location evidence="1">Cytoplasm</location>
    </subcellularLocation>
</comment>
<comment type="similarity">
    <text evidence="1">Belongs to the class-I aminoacyl-tRNA synthetase family.</text>
</comment>